<reference key="1">
    <citation type="journal article" date="2008" name="J. Bacteriol.">
        <title>The complete genome sequence of Escherichia coli DH10B: insights into the biology of a laboratory workhorse.</title>
        <authorList>
            <person name="Durfee T."/>
            <person name="Nelson R."/>
            <person name="Baldwin S."/>
            <person name="Plunkett G. III"/>
            <person name="Burland V."/>
            <person name="Mau B."/>
            <person name="Petrosino J.F."/>
            <person name="Qin X."/>
            <person name="Muzny D.M."/>
            <person name="Ayele M."/>
            <person name="Gibbs R.A."/>
            <person name="Csorgo B."/>
            <person name="Posfai G."/>
            <person name="Weinstock G.M."/>
            <person name="Blattner F.R."/>
        </authorList>
    </citation>
    <scope>NUCLEOTIDE SEQUENCE [LARGE SCALE GENOMIC DNA]</scope>
    <source>
        <strain>K12 / DH10B</strain>
    </source>
</reference>
<protein>
    <recommendedName>
        <fullName evidence="1">Multidrug resistance protein MdtA</fullName>
    </recommendedName>
    <alternativeName>
        <fullName evidence="1">Multidrug transporter MdtA</fullName>
    </alternativeName>
</protein>
<dbReference type="EMBL" id="CP000948">
    <property type="protein sequence ID" value="ACB03246.1"/>
    <property type="molecule type" value="Genomic_DNA"/>
</dbReference>
<dbReference type="RefSeq" id="WP_000678989.1">
    <property type="nucleotide sequence ID" value="NC_010473.1"/>
</dbReference>
<dbReference type="SMR" id="B1X7H0"/>
<dbReference type="KEGG" id="ecd:ECDH10B_2226"/>
<dbReference type="HOGENOM" id="CLU_018816_2_0_6"/>
<dbReference type="GO" id="GO:1990281">
    <property type="term" value="C:efflux pump complex"/>
    <property type="evidence" value="ECO:0007669"/>
    <property type="project" value="TreeGrafter"/>
</dbReference>
<dbReference type="GO" id="GO:0005886">
    <property type="term" value="C:plasma membrane"/>
    <property type="evidence" value="ECO:0007669"/>
    <property type="project" value="UniProtKB-SubCell"/>
</dbReference>
<dbReference type="GO" id="GO:0015562">
    <property type="term" value="F:efflux transmembrane transporter activity"/>
    <property type="evidence" value="ECO:0007669"/>
    <property type="project" value="TreeGrafter"/>
</dbReference>
<dbReference type="FunFam" id="2.40.420.20:FF:000001">
    <property type="entry name" value="Efflux RND transporter periplasmic adaptor subunit"/>
    <property type="match status" value="1"/>
</dbReference>
<dbReference type="FunFam" id="1.10.287.470:FF:000005">
    <property type="entry name" value="Multidrug resistance protein MdtA"/>
    <property type="match status" value="1"/>
</dbReference>
<dbReference type="FunFam" id="2.40.30.170:FF:000006">
    <property type="entry name" value="Multidrug resistance protein MdtA"/>
    <property type="match status" value="1"/>
</dbReference>
<dbReference type="Gene3D" id="2.40.30.170">
    <property type="match status" value="1"/>
</dbReference>
<dbReference type="Gene3D" id="2.40.420.20">
    <property type="match status" value="1"/>
</dbReference>
<dbReference type="Gene3D" id="2.40.50.100">
    <property type="match status" value="1"/>
</dbReference>
<dbReference type="Gene3D" id="1.10.287.470">
    <property type="entry name" value="Helix hairpin bin"/>
    <property type="match status" value="1"/>
</dbReference>
<dbReference type="HAMAP" id="MF_01422">
    <property type="entry name" value="MdtA"/>
    <property type="match status" value="1"/>
</dbReference>
<dbReference type="InterPro" id="IPR032317">
    <property type="entry name" value="CusB_D23"/>
</dbReference>
<dbReference type="InterPro" id="IPR022824">
    <property type="entry name" value="Multidrug-R_MdtA"/>
</dbReference>
<dbReference type="InterPro" id="IPR006143">
    <property type="entry name" value="RND_pump_MFP"/>
</dbReference>
<dbReference type="NCBIfam" id="NF008589">
    <property type="entry name" value="PRK11556.1"/>
    <property type="match status" value="1"/>
</dbReference>
<dbReference type="NCBIfam" id="TIGR01730">
    <property type="entry name" value="RND_mfp"/>
    <property type="match status" value="1"/>
</dbReference>
<dbReference type="PANTHER" id="PTHR30469">
    <property type="entry name" value="MULTIDRUG RESISTANCE PROTEIN MDTA"/>
    <property type="match status" value="1"/>
</dbReference>
<dbReference type="PANTHER" id="PTHR30469:SF12">
    <property type="entry name" value="MULTIDRUG RESISTANCE PROTEIN MDTA"/>
    <property type="match status" value="1"/>
</dbReference>
<dbReference type="Pfam" id="PF16576">
    <property type="entry name" value="HlyD_D23"/>
    <property type="match status" value="1"/>
</dbReference>
<dbReference type="SUPFAM" id="SSF111369">
    <property type="entry name" value="HlyD-like secretion proteins"/>
    <property type="match status" value="1"/>
</dbReference>
<proteinExistence type="inferred from homology"/>
<evidence type="ECO:0000255" key="1">
    <source>
        <dbReference type="HAMAP-Rule" id="MF_01422"/>
    </source>
</evidence>
<evidence type="ECO:0000256" key="2">
    <source>
        <dbReference type="SAM" id="MobiDB-lite"/>
    </source>
</evidence>
<keyword id="KW-0997">Cell inner membrane</keyword>
<keyword id="KW-1003">Cell membrane</keyword>
<keyword id="KW-0472">Membrane</keyword>
<keyword id="KW-0732">Signal</keyword>
<keyword id="KW-0813">Transport</keyword>
<name>MDTA_ECODH</name>
<comment type="function">
    <text evidence="1">The MdtABC tripartite complex confers resistance against novobiocin and deoxycholate.</text>
</comment>
<comment type="subunit">
    <text evidence="1">Part of a tripartite efflux system composed of MdtA, MdtB and MdtC.</text>
</comment>
<comment type="subcellular location">
    <subcellularLocation>
        <location evidence="1">Cell inner membrane</location>
        <topology evidence="1">Peripheral membrane protein</topology>
    </subcellularLocation>
</comment>
<comment type="induction">
    <text evidence="1">The mdtABC operon is transcriptionally activated by BaeR.</text>
</comment>
<comment type="similarity">
    <text evidence="1">Belongs to the membrane fusion protein (MFP) (TC 8.A.1) family.</text>
</comment>
<gene>
    <name evidence="1" type="primary">mdtA</name>
    <name type="ordered locus">ECDH10B_2226</name>
</gene>
<sequence>MKGSYKSRWVIVIVVVIAAIAAFWFWQGRNDSRSAAPGATKQAQQSPAGGRRGMRSGPLAPVQAATAVEQAVPRYLTGLGTITAANTVTVRSRVDGQLIALHFQEGQQVKAGDLLAEIDPSQFKVALAQAQGQLAKDKATLANARRDLARYQQLAKTNLVSRQELDAQQALVSETEGTIKADEASVASAQLQLDWSRITAPVDGRVGLKQVDVGNQISSGDTTGIVVITQTHPIDLVFTLPESDIATVVQAQKAGKPLVVEAWDRTNSKKLSEGTLLSLDNQIDATTGTIKVKARFNNQDDALFPNQFVNARMLVDTEQNAVVIPTAALQMGNEGHFVWVLNSENKVSKHLVTPGIQDSQKVVIRAGISAGDRVVTDGIDRLTEGAKVEVVEAQSATTPEEKATSREYAKKGARS</sequence>
<feature type="signal peptide" evidence="1">
    <location>
        <begin position="1"/>
        <end position="21"/>
    </location>
</feature>
<feature type="chain" id="PRO_1000145638" description="Multidrug resistance protein MdtA">
    <location>
        <begin position="22"/>
        <end position="415"/>
    </location>
</feature>
<feature type="region of interest" description="Disordered" evidence="2">
    <location>
        <begin position="32"/>
        <end position="60"/>
    </location>
</feature>
<feature type="region of interest" description="Disordered" evidence="2">
    <location>
        <begin position="392"/>
        <end position="415"/>
    </location>
</feature>
<feature type="compositionally biased region" description="Basic and acidic residues" evidence="2">
    <location>
        <begin position="399"/>
        <end position="415"/>
    </location>
</feature>
<accession>B1X7H0</accession>
<organism>
    <name type="scientific">Escherichia coli (strain K12 / DH10B)</name>
    <dbReference type="NCBI Taxonomy" id="316385"/>
    <lineage>
        <taxon>Bacteria</taxon>
        <taxon>Pseudomonadati</taxon>
        <taxon>Pseudomonadota</taxon>
        <taxon>Gammaproteobacteria</taxon>
        <taxon>Enterobacterales</taxon>
        <taxon>Enterobacteriaceae</taxon>
        <taxon>Escherichia</taxon>
    </lineage>
</organism>